<evidence type="ECO:0000250" key="1"/>
<evidence type="ECO:0000255" key="2">
    <source>
        <dbReference type="PROSITE-ProRule" id="PRU00159"/>
    </source>
</evidence>
<evidence type="ECO:0000255" key="3">
    <source>
        <dbReference type="PROSITE-ProRule" id="PRU10027"/>
    </source>
</evidence>
<evidence type="ECO:0000256" key="4">
    <source>
        <dbReference type="SAM" id="MobiDB-lite"/>
    </source>
</evidence>
<reference key="1">
    <citation type="journal article" date="2000" name="J. Virol.">
        <title>The genome of a very virulent Marek's disease virus.</title>
        <authorList>
            <person name="Tulman E.R."/>
            <person name="Afonso C.L."/>
            <person name="Lu Z."/>
            <person name="Zsak L."/>
            <person name="Rock D.L."/>
            <person name="Kutish G.F."/>
        </authorList>
    </citation>
    <scope>NUCLEOTIDE SEQUENCE [LARGE SCALE GENOMIC DNA]</scope>
</reference>
<sequence length="513" mass="58934">MDTESKNKKTTNGGENSNCSHSTRTPDKSIEERFYNWERRSRTTNRFGTTVNSRSYNMYFQGTHNTSRRHTYGNIHHRRRFSDNIRRCLRQLCMKRKTPAKKRSDKLVSRPSLPEHVFTLARIKNVTTFIFNVTSELHYSHIDLKEMPIYAGSGSYGVVKIFKKTDIAVKKVLECFKTELLMTLIAGECALRAKSTLRINNIIPLLAFSIPSKELVFPAYHMDMDSYYHRLARIDKTVQHWKAIEKTFMDLGKAVVFLNVSCGLTHLDIKCGNIFVNVTEGPNPILVDAVIGDFSLALLNTNSTILKSRFDVNISSDKIQSLKVCRGNIKPVFDLVLGHGQTQPCELMIKALNGVGFERRSTPLTSDEGVSIDMYALGQSLMEVILAAGMNFTHRFGISSNPLHFYYHRLMRADYLLDILAYRCMLYQHLFPMTPLTSKNGIPWERAEKIRLQLHSSRHRAEFDKYLEAYDITHRKLFDSLNIFPYLNNLLELAALYCHANPVARTADLLLWN</sequence>
<dbReference type="EC" id="2.7.11.1"/>
<dbReference type="EMBL" id="AF243438">
    <property type="protein sequence ID" value="AAG14205.1"/>
    <property type="molecule type" value="Genomic_DNA"/>
</dbReference>
<dbReference type="RefSeq" id="YP_001033941.1">
    <property type="nucleotide sequence ID" value="NC_002229.3"/>
</dbReference>
<dbReference type="GeneID" id="4811486"/>
<dbReference type="KEGG" id="vg:4811486"/>
<dbReference type="Proteomes" id="UP000008072">
    <property type="component" value="Segment"/>
</dbReference>
<dbReference type="GO" id="GO:0042025">
    <property type="term" value="C:host cell nucleus"/>
    <property type="evidence" value="ECO:0007669"/>
    <property type="project" value="UniProtKB-SubCell"/>
</dbReference>
<dbReference type="GO" id="GO:0019033">
    <property type="term" value="C:viral tegument"/>
    <property type="evidence" value="ECO:0007669"/>
    <property type="project" value="UniProtKB-SubCell"/>
</dbReference>
<dbReference type="GO" id="GO:0005524">
    <property type="term" value="F:ATP binding"/>
    <property type="evidence" value="ECO:0007669"/>
    <property type="project" value="UniProtKB-KW"/>
</dbReference>
<dbReference type="GO" id="GO:0106310">
    <property type="term" value="F:protein serine kinase activity"/>
    <property type="evidence" value="ECO:0007669"/>
    <property type="project" value="RHEA"/>
</dbReference>
<dbReference type="GO" id="GO:0004674">
    <property type="term" value="F:protein serine/threonine kinase activity"/>
    <property type="evidence" value="ECO:0007669"/>
    <property type="project" value="UniProtKB-KW"/>
</dbReference>
<dbReference type="Gene3D" id="1.10.510.10">
    <property type="entry name" value="Transferase(Phosphotransferase) domain 1"/>
    <property type="match status" value="1"/>
</dbReference>
<dbReference type="InterPro" id="IPR011009">
    <property type="entry name" value="Kinase-like_dom_sf"/>
</dbReference>
<dbReference type="InterPro" id="IPR000719">
    <property type="entry name" value="Prot_kinase_dom"/>
</dbReference>
<dbReference type="InterPro" id="IPR008271">
    <property type="entry name" value="Ser/Thr_kinase_AS"/>
</dbReference>
<dbReference type="Pfam" id="PF00069">
    <property type="entry name" value="Pkinase"/>
    <property type="match status" value="1"/>
</dbReference>
<dbReference type="SUPFAM" id="SSF56112">
    <property type="entry name" value="Protein kinase-like (PK-like)"/>
    <property type="match status" value="1"/>
</dbReference>
<dbReference type="PROSITE" id="PS50011">
    <property type="entry name" value="PROTEIN_KINASE_DOM"/>
    <property type="match status" value="1"/>
</dbReference>
<dbReference type="PROSITE" id="PS00108">
    <property type="entry name" value="PROTEIN_KINASE_ST"/>
    <property type="match status" value="1"/>
</dbReference>
<organism>
    <name type="scientific">Gallid herpesvirus 2 (strain Chicken/Md5/ATCC VR-987)</name>
    <name type="common">GaHV-2</name>
    <name type="synonym">Marek's disease herpesvirus type 1</name>
    <dbReference type="NCBI Taxonomy" id="10389"/>
    <lineage>
        <taxon>Viruses</taxon>
        <taxon>Duplodnaviria</taxon>
        <taxon>Heunggongvirae</taxon>
        <taxon>Peploviricota</taxon>
        <taxon>Herviviricetes</taxon>
        <taxon>Herpesvirales</taxon>
        <taxon>Orthoherpesviridae</taxon>
        <taxon>Alphaherpesvirinae</taxon>
        <taxon>Mardivirus</taxon>
        <taxon>Mardivirus gallidalpha2</taxon>
        <taxon>Gallid alphaherpesvirus 2</taxon>
    </lineage>
</organism>
<organismHost>
    <name type="scientific">Gallus gallus</name>
    <name type="common">Chicken</name>
    <dbReference type="NCBI Taxonomy" id="9031"/>
</organismHost>
<feature type="chain" id="PRO_0000406505" description="Serine/threonine-protein kinase UL13 homolog">
    <location>
        <begin position="1"/>
        <end position="513"/>
    </location>
</feature>
<feature type="domain" description="Protein kinase" evidence="2">
    <location>
        <begin position="145"/>
        <end position="487"/>
    </location>
</feature>
<feature type="region of interest" description="Disordered" evidence="4">
    <location>
        <begin position="1"/>
        <end position="27"/>
    </location>
</feature>
<feature type="compositionally biased region" description="Polar residues" evidence="4">
    <location>
        <begin position="10"/>
        <end position="23"/>
    </location>
</feature>
<feature type="active site" description="Proton acceptor" evidence="2 3">
    <location>
        <position position="268"/>
    </location>
</feature>
<feature type="binding site" evidence="2">
    <location>
        <begin position="151"/>
        <end position="159"/>
    </location>
    <ligand>
        <name>ATP</name>
        <dbReference type="ChEBI" id="CHEBI:30616"/>
    </ligand>
</feature>
<feature type="binding site" evidence="2">
    <location>
        <position position="170"/>
    </location>
    <ligand>
        <name>ATP</name>
        <dbReference type="ChEBI" id="CHEBI:30616"/>
    </ligand>
</feature>
<keyword id="KW-0067">ATP-binding</keyword>
<keyword id="KW-1048">Host nucleus</keyword>
<keyword id="KW-0418">Kinase</keyword>
<keyword id="KW-0547">Nucleotide-binding</keyword>
<keyword id="KW-1185">Reference proteome</keyword>
<keyword id="KW-0723">Serine/threonine-protein kinase</keyword>
<keyword id="KW-0808">Transferase</keyword>
<keyword id="KW-0946">Virion</keyword>
<keyword id="KW-0920">Virion tegument</keyword>
<comment type="function">
    <text evidence="1">Multifunctional serine/threonine kinase that plays a role in several processes including egress of virus particles from the nucleus, modulation of the actin cytoskeleton and regulation of viral and cellular gene expression.</text>
</comment>
<comment type="catalytic activity">
    <reaction>
        <text>L-seryl-[protein] + ATP = O-phospho-L-seryl-[protein] + ADP + H(+)</text>
        <dbReference type="Rhea" id="RHEA:17989"/>
        <dbReference type="Rhea" id="RHEA-COMP:9863"/>
        <dbReference type="Rhea" id="RHEA-COMP:11604"/>
        <dbReference type="ChEBI" id="CHEBI:15378"/>
        <dbReference type="ChEBI" id="CHEBI:29999"/>
        <dbReference type="ChEBI" id="CHEBI:30616"/>
        <dbReference type="ChEBI" id="CHEBI:83421"/>
        <dbReference type="ChEBI" id="CHEBI:456216"/>
        <dbReference type="EC" id="2.7.11.1"/>
    </reaction>
</comment>
<comment type="catalytic activity">
    <reaction>
        <text>L-threonyl-[protein] + ATP = O-phospho-L-threonyl-[protein] + ADP + H(+)</text>
        <dbReference type="Rhea" id="RHEA:46608"/>
        <dbReference type="Rhea" id="RHEA-COMP:11060"/>
        <dbReference type="Rhea" id="RHEA-COMP:11605"/>
        <dbReference type="ChEBI" id="CHEBI:15378"/>
        <dbReference type="ChEBI" id="CHEBI:30013"/>
        <dbReference type="ChEBI" id="CHEBI:30616"/>
        <dbReference type="ChEBI" id="CHEBI:61977"/>
        <dbReference type="ChEBI" id="CHEBI:456216"/>
        <dbReference type="EC" id="2.7.11.1"/>
    </reaction>
</comment>
<comment type="subcellular location">
    <subcellularLocation>
        <location evidence="1">Virion tegument</location>
    </subcellularLocation>
    <subcellularLocation>
        <location evidence="1">Host nucleus</location>
    </subcellularLocation>
</comment>
<comment type="PTM">
    <text evidence="1">Autophosphorylated.</text>
</comment>
<comment type="similarity">
    <text evidence="2">Belongs to the protein kinase superfamily. Ser/Thr protein kinase family.</text>
</comment>
<proteinExistence type="inferred from homology"/>
<name>UL13_GAHVM</name>
<accession>Q9E6Q4</accession>
<gene>
    <name type="primary">MDV025</name>
</gene>
<protein>
    <recommendedName>
        <fullName>Serine/threonine-protein kinase UL13 homolog</fullName>
        <ecNumber>2.7.11.1</ecNumber>
    </recommendedName>
</protein>